<protein>
    <recommendedName>
        <fullName>Group XIIB secretory phospholipase A2-like protein</fullName>
    </recommendedName>
    <alternativeName>
        <fullName>Group XIII secretory phospholipase A2-like protein</fullName>
        <shortName>GXIII sPLA2-like</shortName>
    </alternativeName>
    <alternativeName>
        <fullName>sPLA2-GXIIB</fullName>
        <shortName>GXIIB</shortName>
    </alternativeName>
</protein>
<organism>
    <name type="scientific">Mus musculus</name>
    <name type="common">Mouse</name>
    <dbReference type="NCBI Taxonomy" id="10090"/>
    <lineage>
        <taxon>Eukaryota</taxon>
        <taxon>Metazoa</taxon>
        <taxon>Chordata</taxon>
        <taxon>Craniata</taxon>
        <taxon>Vertebrata</taxon>
        <taxon>Euteleostomi</taxon>
        <taxon>Mammalia</taxon>
        <taxon>Eutheria</taxon>
        <taxon>Euarchontoglires</taxon>
        <taxon>Glires</taxon>
        <taxon>Rodentia</taxon>
        <taxon>Myomorpha</taxon>
        <taxon>Muroidea</taxon>
        <taxon>Muridae</taxon>
        <taxon>Murinae</taxon>
        <taxon>Mus</taxon>
        <taxon>Mus</taxon>
    </lineage>
</organism>
<keyword id="KW-0106">Calcium</keyword>
<keyword id="KW-0479">Metal-binding</keyword>
<keyword id="KW-1185">Reference proteome</keyword>
<keyword id="KW-0964">Secreted</keyword>
<keyword id="KW-0732">Signal</keyword>
<accession>Q99P27</accession>
<sequence length="195" mass="21736">MKLLCGFFLLWLGLVGNLAQSDPSPKEEESYSDWGLRQLRGSFESVNSYVDSFMELLGGKNGVCQYRCRYGKAPMPRPGYKAQEPNGCSSYFLGIKVPGSMDLGIPAMTKCCNQLDVCYDTCGANKYRCDAKFRWCLHSICSDLKRTLGFVSNVEAACDSLADTVFNTVWTLGCRPFMNSQRAACICAEEEKEEL</sequence>
<comment type="function">
    <text>Not known; does not seem to have catalytic activity.</text>
</comment>
<comment type="cofactor">
    <cofactor evidence="1">
        <name>Ca(2+)</name>
        <dbReference type="ChEBI" id="CHEBI:29108"/>
    </cofactor>
    <text evidence="1">Binds 1 Ca(2+) ion per subunit.</text>
</comment>
<comment type="subcellular location">
    <subcellularLocation>
        <location>Secreted</location>
    </subcellularLocation>
</comment>
<comment type="similarity">
    <text evidence="3">Belongs to the phospholipase A2 family.</text>
</comment>
<name>PG12B_MOUSE</name>
<proteinExistence type="evidence at protein level"/>
<gene>
    <name type="primary">Pla2g12b</name>
    <name type="synonym">Pla2g13</name>
    <name type="ORF">Fksg71</name>
</gene>
<reference key="1">
    <citation type="submission" date="2001-01" db="EMBL/GenBank/DDBJ databases">
        <title>Cloning and characterization of FKSG71, a novel gene encoding group XIII secreted phospholipase A2.</title>
        <authorList>
            <person name="Wang Y.-G."/>
            <person name="Gong L."/>
        </authorList>
    </citation>
    <scope>NUCLEOTIDE SEQUENCE [MRNA]</scope>
    <source>
        <strain>C57BL/6 X DBA</strain>
    </source>
</reference>
<reference key="2">
    <citation type="journal article" date="2010" name="Cell">
        <title>A tissue-specific atlas of mouse protein phosphorylation and expression.</title>
        <authorList>
            <person name="Huttlin E.L."/>
            <person name="Jedrychowski M.P."/>
            <person name="Elias J.E."/>
            <person name="Goswami T."/>
            <person name="Rad R."/>
            <person name="Beausoleil S.A."/>
            <person name="Villen J."/>
            <person name="Haas W."/>
            <person name="Sowa M.E."/>
            <person name="Gygi S.P."/>
        </authorList>
    </citation>
    <scope>IDENTIFICATION BY MASS SPECTROMETRY [LARGE SCALE ANALYSIS]</scope>
    <source>
        <tissue>Liver</tissue>
    </source>
</reference>
<dbReference type="EMBL" id="AF339738">
    <property type="protein sequence ID" value="AAK01739.1"/>
    <property type="molecule type" value="mRNA"/>
</dbReference>
<dbReference type="CCDS" id="CCDS23864.1"/>
<dbReference type="FunCoup" id="Q99P27">
    <property type="interactions" value="1"/>
</dbReference>
<dbReference type="IntAct" id="Q99P27">
    <property type="interactions" value="1"/>
</dbReference>
<dbReference type="STRING" id="10090.ENSMUSP00000009790"/>
<dbReference type="jPOST" id="Q99P27"/>
<dbReference type="PaxDb" id="10090-ENSMUSP00000009790"/>
<dbReference type="ProteomicsDB" id="288177"/>
<dbReference type="AGR" id="MGI:1917086"/>
<dbReference type="MGI" id="MGI:1917086">
    <property type="gene designation" value="Pla2g12b"/>
</dbReference>
<dbReference type="eggNOG" id="ENOG502QQU1">
    <property type="taxonomic scope" value="Eukaryota"/>
</dbReference>
<dbReference type="InParanoid" id="Q99P27"/>
<dbReference type="PhylomeDB" id="Q99P27"/>
<dbReference type="PRO" id="PR:Q99P27"/>
<dbReference type="Proteomes" id="UP000000589">
    <property type="component" value="Unplaced"/>
</dbReference>
<dbReference type="RNAct" id="Q99P27">
    <property type="molecule type" value="protein"/>
</dbReference>
<dbReference type="GO" id="GO:0005576">
    <property type="term" value="C:extracellular region"/>
    <property type="evidence" value="ECO:0007669"/>
    <property type="project" value="UniProtKB-SubCell"/>
</dbReference>
<dbReference type="GO" id="GO:0005509">
    <property type="term" value="F:calcium ion binding"/>
    <property type="evidence" value="ECO:0007669"/>
    <property type="project" value="InterPro"/>
</dbReference>
<dbReference type="GO" id="GO:0004623">
    <property type="term" value="F:phospholipase A2 activity"/>
    <property type="evidence" value="ECO:0007669"/>
    <property type="project" value="InterPro"/>
</dbReference>
<dbReference type="GO" id="GO:0050482">
    <property type="term" value="P:arachidonate secretion"/>
    <property type="evidence" value="ECO:0007669"/>
    <property type="project" value="InterPro"/>
</dbReference>
<dbReference type="GO" id="GO:0042632">
    <property type="term" value="P:cholesterol homeostasis"/>
    <property type="evidence" value="ECO:0000315"/>
    <property type="project" value="MGI"/>
</dbReference>
<dbReference type="GO" id="GO:0016042">
    <property type="term" value="P:lipid catabolic process"/>
    <property type="evidence" value="ECO:0007669"/>
    <property type="project" value="InterPro"/>
</dbReference>
<dbReference type="GO" id="GO:0034374">
    <property type="term" value="P:low-density lipoprotein particle remodeling"/>
    <property type="evidence" value="ECO:0000314"/>
    <property type="project" value="MGI"/>
</dbReference>
<dbReference type="GO" id="GO:0006644">
    <property type="term" value="P:phospholipid metabolic process"/>
    <property type="evidence" value="ECO:0007669"/>
    <property type="project" value="InterPro"/>
</dbReference>
<dbReference type="GO" id="GO:0070328">
    <property type="term" value="P:triglyceride homeostasis"/>
    <property type="evidence" value="ECO:0000315"/>
    <property type="project" value="MGI"/>
</dbReference>
<dbReference type="FunFam" id="1.20.90.10:FF:000003">
    <property type="entry name" value="Group XIIB secretory phospholipase A2-like protein"/>
    <property type="match status" value="1"/>
</dbReference>
<dbReference type="Gene3D" id="1.20.90.10">
    <property type="entry name" value="Phospholipase A2 domain"/>
    <property type="match status" value="1"/>
</dbReference>
<dbReference type="InterPro" id="IPR010711">
    <property type="entry name" value="PLA2G12"/>
</dbReference>
<dbReference type="InterPro" id="IPR036444">
    <property type="entry name" value="PLipase_A2_dom_sf"/>
</dbReference>
<dbReference type="PANTHER" id="PTHR12824">
    <property type="entry name" value="GROUP XII SECRETORY PHOSPHOLIPASE A2 FAMILY MEMBER"/>
    <property type="match status" value="1"/>
</dbReference>
<dbReference type="PANTHER" id="PTHR12824:SF2">
    <property type="entry name" value="GROUP XIIB SECRETORY PHOSPHOLIPASE A2-LIKE PROTEIN"/>
    <property type="match status" value="1"/>
</dbReference>
<dbReference type="Pfam" id="PF06951">
    <property type="entry name" value="PLA2G12"/>
    <property type="match status" value="1"/>
</dbReference>
<dbReference type="SUPFAM" id="SSF48619">
    <property type="entry name" value="Phospholipase A2, PLA2"/>
    <property type="match status" value="1"/>
</dbReference>
<dbReference type="PROSITE" id="PS00014">
    <property type="entry name" value="ER_TARGET"/>
    <property type="match status" value="1"/>
</dbReference>
<feature type="signal peptide" evidence="2">
    <location>
        <begin position="1"/>
        <end position="19"/>
    </location>
</feature>
<feature type="chain" id="PRO_0000022773" description="Group XIIB secretory phospholipase A2-like protein">
    <location>
        <begin position="20"/>
        <end position="195"/>
    </location>
</feature>
<feature type="binding site" evidence="1">
    <location>
        <position position="89"/>
    </location>
    <ligand>
        <name>Ca(2+)</name>
        <dbReference type="ChEBI" id="CHEBI:29108"/>
    </ligand>
</feature>
<feature type="binding site" evidence="1">
    <location>
        <position position="91"/>
    </location>
    <ligand>
        <name>Ca(2+)</name>
        <dbReference type="ChEBI" id="CHEBI:29108"/>
    </ligand>
</feature>
<feature type="binding site" evidence="1">
    <location>
        <position position="93"/>
    </location>
    <ligand>
        <name>Ca(2+)</name>
        <dbReference type="ChEBI" id="CHEBI:29108"/>
    </ligand>
</feature>
<feature type="binding site" evidence="1">
    <location>
        <position position="116"/>
    </location>
    <ligand>
        <name>Ca(2+)</name>
        <dbReference type="ChEBI" id="CHEBI:29108"/>
    </ligand>
</feature>
<evidence type="ECO:0000250" key="1"/>
<evidence type="ECO:0000255" key="2"/>
<evidence type="ECO:0000305" key="3"/>